<keyword id="KW-0808">Transferase</keyword>
<proteinExistence type="evidence at transcript level"/>
<dbReference type="EC" id="2.5.1.18"/>
<dbReference type="EMBL" id="M77680">
    <property type="protein sequence ID" value="AAA29139.1"/>
    <property type="molecule type" value="mRNA"/>
</dbReference>
<dbReference type="EMBL" id="A00994">
    <property type="protein sequence ID" value="CAA00119.1"/>
    <property type="molecule type" value="Unassigned_RNA"/>
</dbReference>
<dbReference type="SMR" id="P31671"/>
<dbReference type="GO" id="GO:0004364">
    <property type="term" value="F:glutathione transferase activity"/>
    <property type="evidence" value="ECO:0007669"/>
    <property type="project" value="UniProtKB-EC"/>
</dbReference>
<dbReference type="GO" id="GO:0006749">
    <property type="term" value="P:glutathione metabolic process"/>
    <property type="evidence" value="ECO:0007669"/>
    <property type="project" value="TreeGrafter"/>
</dbReference>
<dbReference type="CDD" id="cd03209">
    <property type="entry name" value="GST_C_Mu"/>
    <property type="match status" value="1"/>
</dbReference>
<dbReference type="CDD" id="cd03075">
    <property type="entry name" value="GST_N_Mu"/>
    <property type="match status" value="1"/>
</dbReference>
<dbReference type="FunFam" id="1.20.1050.10:FF:000003">
    <property type="entry name" value="Glutathione S-transferase 2"/>
    <property type="match status" value="1"/>
</dbReference>
<dbReference type="Gene3D" id="1.20.1050.130">
    <property type="match status" value="1"/>
</dbReference>
<dbReference type="InterPro" id="IPR010987">
    <property type="entry name" value="Glutathione-S-Trfase_C-like"/>
</dbReference>
<dbReference type="InterPro" id="IPR036282">
    <property type="entry name" value="Glutathione-S-Trfase_C_sf"/>
</dbReference>
<dbReference type="InterPro" id="IPR004045">
    <property type="entry name" value="Glutathione_S-Trfase_N"/>
</dbReference>
<dbReference type="InterPro" id="IPR004046">
    <property type="entry name" value="GST_C"/>
</dbReference>
<dbReference type="InterPro" id="IPR050213">
    <property type="entry name" value="GST_superfamily"/>
</dbReference>
<dbReference type="InterPro" id="IPR036249">
    <property type="entry name" value="Thioredoxin-like_sf"/>
</dbReference>
<dbReference type="PANTHER" id="PTHR11571">
    <property type="entry name" value="GLUTATHIONE S-TRANSFERASE"/>
    <property type="match status" value="1"/>
</dbReference>
<dbReference type="PANTHER" id="PTHR11571:SF222">
    <property type="entry name" value="GLUTATHIONE TRANSFERASE"/>
    <property type="match status" value="1"/>
</dbReference>
<dbReference type="Pfam" id="PF14497">
    <property type="entry name" value="GST_C_3"/>
    <property type="match status" value="1"/>
</dbReference>
<dbReference type="Pfam" id="PF02798">
    <property type="entry name" value="GST_N"/>
    <property type="match status" value="1"/>
</dbReference>
<dbReference type="SFLD" id="SFLDG01205">
    <property type="entry name" value="AMPS.1"/>
    <property type="match status" value="1"/>
</dbReference>
<dbReference type="SFLD" id="SFLDG00363">
    <property type="entry name" value="AMPS_(cytGST):_Alpha-__Mu-__Pi"/>
    <property type="match status" value="1"/>
</dbReference>
<dbReference type="SUPFAM" id="SSF47616">
    <property type="entry name" value="GST C-terminal domain-like"/>
    <property type="match status" value="1"/>
</dbReference>
<dbReference type="SUPFAM" id="SSF52833">
    <property type="entry name" value="Thioredoxin-like"/>
    <property type="match status" value="1"/>
</dbReference>
<dbReference type="PROSITE" id="PS50405">
    <property type="entry name" value="GST_CTER"/>
    <property type="match status" value="1"/>
</dbReference>
<dbReference type="PROSITE" id="PS50404">
    <property type="entry name" value="GST_NTER"/>
    <property type="match status" value="1"/>
</dbReference>
<sequence length="218" mass="25327">MPAKLGYWKIRGLQQPVRLFLEYLGEEYEEHLYGRNDREKWLGDKFNMGLDLPNLPYYIDDKCKLTQSVAIMRYIADKHGMLGSTPEERARISMIEGAAMDLRIGFGLTCYNPKFEELKGDYLKGLPTTLKMWSDFLGDRQYLIGSSVSHVDFMVYEALDCIRYLAPQCLDDFPKLKEFKSRIEDLPKIKEYMKSERFIKWPLHSWTSPFGGGDAPPA</sequence>
<comment type="function">
    <text>Conjugation of reduced glutathione to a wide number of exogenous and endogenous hydrophobic electrophiles.</text>
</comment>
<comment type="function">
    <text>GST isoenzymes appear to play a central role in the parasite detoxification system. Other functions are also suspected including a role in increasing the solubility of haematin in the parasite gut.</text>
</comment>
<comment type="catalytic activity">
    <reaction>
        <text>RX + glutathione = an S-substituted glutathione + a halide anion + H(+)</text>
        <dbReference type="Rhea" id="RHEA:16437"/>
        <dbReference type="ChEBI" id="CHEBI:15378"/>
        <dbReference type="ChEBI" id="CHEBI:16042"/>
        <dbReference type="ChEBI" id="CHEBI:17792"/>
        <dbReference type="ChEBI" id="CHEBI:57925"/>
        <dbReference type="ChEBI" id="CHEBI:90779"/>
        <dbReference type="EC" id="2.5.1.18"/>
    </reaction>
</comment>
<comment type="subunit">
    <text>Homodimer.</text>
</comment>
<comment type="similarity">
    <text evidence="3">Belongs to the GST superfamily. Mu family.</text>
</comment>
<accession>P31671</accession>
<feature type="initiator methionine" description="Removed" evidence="1">
    <location>
        <position position="1"/>
    </location>
</feature>
<feature type="chain" id="PRO_0000185809" description="Glutathione S-transferase class-mu 26 kDa isozyme 7">
    <location>
        <begin position="2"/>
        <end position="218"/>
    </location>
</feature>
<feature type="domain" description="GST N-terminal">
    <location>
        <begin position="2"/>
        <end position="83"/>
    </location>
</feature>
<feature type="domain" description="GST C-terminal">
    <location>
        <begin position="85"/>
        <end position="203"/>
    </location>
</feature>
<feature type="binding site" evidence="2">
    <location>
        <begin position="7"/>
        <end position="8"/>
    </location>
    <ligand>
        <name>glutathione</name>
        <dbReference type="ChEBI" id="CHEBI:57925"/>
    </ligand>
</feature>
<feature type="binding site" evidence="2">
    <location>
        <begin position="41"/>
        <end position="45"/>
    </location>
    <ligand>
        <name>glutathione</name>
        <dbReference type="ChEBI" id="CHEBI:57925"/>
    </ligand>
</feature>
<feature type="binding site" evidence="2">
    <location>
        <begin position="54"/>
        <end position="55"/>
    </location>
    <ligand>
        <name>glutathione</name>
        <dbReference type="ChEBI" id="CHEBI:57925"/>
    </ligand>
</feature>
<feature type="binding site" evidence="2">
    <location>
        <begin position="67"/>
        <end position="68"/>
    </location>
    <ligand>
        <name>glutathione</name>
        <dbReference type="ChEBI" id="CHEBI:57925"/>
    </ligand>
</feature>
<feature type="binding site" evidence="1">
    <location>
        <position position="111"/>
    </location>
    <ligand>
        <name>substrate</name>
    </ligand>
</feature>
<feature type="sequence conflict" description="In Ref. 3; CAA00119." evidence="3" ref="3">
    <original>NDREKWLG</original>
    <variation>MIGRNGWA</variation>
    <location>
        <begin position="36"/>
        <end position="43"/>
    </location>
</feature>
<feature type="sequence conflict" description="In Ref. 3; CAA00119." evidence="3" ref="3">
    <original>IKEYMKSER</original>
    <variation>SRYMSRA</variation>
    <location>
        <begin position="189"/>
        <end position="197"/>
    </location>
</feature>
<name>GST28_FASHE</name>
<protein>
    <recommendedName>
        <fullName>Glutathione S-transferase class-mu 26 kDa isozyme 7</fullName>
        <shortName>GST7</shortName>
        <ecNumber>2.5.1.18</ecNumber>
    </recommendedName>
    <alternativeName>
        <fullName>Fh7</fullName>
    </alternativeName>
</protein>
<reference key="1">
    <citation type="journal article" date="1992" name="Exp. Parasitol.">
        <title>Molecular characterization of cDNA sequences encoding glutathione S-transferases of Fasciola hepatica.</title>
        <authorList>
            <person name="Panaccio M."/>
            <person name="Wilson L.R."/>
            <person name="Crameri S.L."/>
            <person name="Wijffels G.L."/>
            <person name="Spithill T.W."/>
        </authorList>
    </citation>
    <scope>NUCLEOTIDE SEQUENCE [MRNA]</scope>
</reference>
<reference key="2">
    <citation type="journal article" date="1993" name="Exp. Parasitol.">
        <authorList>
            <person name="Panaccio M."/>
            <person name="Wilson L.R."/>
            <person name="Crameri S.L."/>
            <person name="Wijffels G.L."/>
            <person name="Spithill T.W."/>
        </authorList>
    </citation>
    <scope>ERRATUM OF PUBMED:1740183</scope>
</reference>
<reference key="3">
    <citation type="patent" date="1990-08-09" number="WO9008819">
        <authorList>
            <person name="Crameri S."/>
        </authorList>
    </citation>
    <scope>NUCLEOTIDE SEQUENCE [GENOMIC DNA] OF 9-218</scope>
</reference>
<evidence type="ECO:0000250" key="1"/>
<evidence type="ECO:0000250" key="2">
    <source>
        <dbReference type="UniProtKB" id="P08515"/>
    </source>
</evidence>
<evidence type="ECO:0000305" key="3"/>
<organism>
    <name type="scientific">Fasciola hepatica</name>
    <name type="common">Liver fluke</name>
    <dbReference type="NCBI Taxonomy" id="6192"/>
    <lineage>
        <taxon>Eukaryota</taxon>
        <taxon>Metazoa</taxon>
        <taxon>Spiralia</taxon>
        <taxon>Lophotrochozoa</taxon>
        <taxon>Platyhelminthes</taxon>
        <taxon>Trematoda</taxon>
        <taxon>Digenea</taxon>
        <taxon>Plagiorchiida</taxon>
        <taxon>Echinostomata</taxon>
        <taxon>Echinostomatoidea</taxon>
        <taxon>Fasciolidae</taxon>
        <taxon>Fasciola</taxon>
    </lineage>
</organism>